<reference key="1">
    <citation type="journal article" date="2005" name="PLoS Biol.">
        <title>The genome sequence of Rickettsia felis identifies the first putative conjugative plasmid in an obligate intracellular parasite.</title>
        <authorList>
            <person name="Ogata H."/>
            <person name="Renesto P."/>
            <person name="Audic S."/>
            <person name="Robert C."/>
            <person name="Blanc G."/>
            <person name="Fournier P.-E."/>
            <person name="Parinello H."/>
            <person name="Claverie J.-M."/>
            <person name="Raoult D."/>
        </authorList>
    </citation>
    <scope>NUCLEOTIDE SEQUENCE [LARGE SCALE GENOMIC DNA]</scope>
    <source>
        <strain>ATCC VR-1525 / URRWXCal2</strain>
    </source>
</reference>
<proteinExistence type="inferred from homology"/>
<evidence type="ECO:0000255" key="1">
    <source>
        <dbReference type="HAMAP-Rule" id="MF_01366"/>
    </source>
</evidence>
<evidence type="ECO:0000305" key="2"/>
<gene>
    <name evidence="1" type="primary">rplM</name>
    <name type="ordered locus">RF_0994</name>
</gene>
<organism>
    <name type="scientific">Rickettsia felis (strain ATCC VR-1525 / URRWXCal2)</name>
    <name type="common">Rickettsia azadi</name>
    <dbReference type="NCBI Taxonomy" id="315456"/>
    <lineage>
        <taxon>Bacteria</taxon>
        <taxon>Pseudomonadati</taxon>
        <taxon>Pseudomonadota</taxon>
        <taxon>Alphaproteobacteria</taxon>
        <taxon>Rickettsiales</taxon>
        <taxon>Rickettsiaceae</taxon>
        <taxon>Rickettsieae</taxon>
        <taxon>Rickettsia</taxon>
        <taxon>spotted fever group</taxon>
    </lineage>
</organism>
<feature type="chain" id="PRO_0000272382" description="Large ribosomal subunit protein uL13">
    <location>
        <begin position="1"/>
        <end position="155"/>
    </location>
</feature>
<dbReference type="EMBL" id="CP000053">
    <property type="protein sequence ID" value="AAY61845.1"/>
    <property type="molecule type" value="Genomic_DNA"/>
</dbReference>
<dbReference type="SMR" id="Q4UKS8"/>
<dbReference type="STRING" id="315456.RF_0994"/>
<dbReference type="KEGG" id="rfe:RF_0994"/>
<dbReference type="eggNOG" id="COG0102">
    <property type="taxonomic scope" value="Bacteria"/>
</dbReference>
<dbReference type="HOGENOM" id="CLU_082184_2_0_5"/>
<dbReference type="OrthoDB" id="9801330at2"/>
<dbReference type="Proteomes" id="UP000008548">
    <property type="component" value="Chromosome"/>
</dbReference>
<dbReference type="GO" id="GO:0022625">
    <property type="term" value="C:cytosolic large ribosomal subunit"/>
    <property type="evidence" value="ECO:0007669"/>
    <property type="project" value="TreeGrafter"/>
</dbReference>
<dbReference type="GO" id="GO:0003729">
    <property type="term" value="F:mRNA binding"/>
    <property type="evidence" value="ECO:0007669"/>
    <property type="project" value="TreeGrafter"/>
</dbReference>
<dbReference type="GO" id="GO:0003735">
    <property type="term" value="F:structural constituent of ribosome"/>
    <property type="evidence" value="ECO:0007669"/>
    <property type="project" value="InterPro"/>
</dbReference>
<dbReference type="GO" id="GO:0017148">
    <property type="term" value="P:negative regulation of translation"/>
    <property type="evidence" value="ECO:0007669"/>
    <property type="project" value="TreeGrafter"/>
</dbReference>
<dbReference type="GO" id="GO:0006412">
    <property type="term" value="P:translation"/>
    <property type="evidence" value="ECO:0007669"/>
    <property type="project" value="UniProtKB-UniRule"/>
</dbReference>
<dbReference type="CDD" id="cd00392">
    <property type="entry name" value="Ribosomal_L13"/>
    <property type="match status" value="1"/>
</dbReference>
<dbReference type="Gene3D" id="3.90.1180.10">
    <property type="entry name" value="Ribosomal protein L13"/>
    <property type="match status" value="1"/>
</dbReference>
<dbReference type="HAMAP" id="MF_01366">
    <property type="entry name" value="Ribosomal_uL13"/>
    <property type="match status" value="1"/>
</dbReference>
<dbReference type="InterPro" id="IPR005822">
    <property type="entry name" value="Ribosomal_uL13"/>
</dbReference>
<dbReference type="InterPro" id="IPR005823">
    <property type="entry name" value="Ribosomal_uL13_bac-type"/>
</dbReference>
<dbReference type="InterPro" id="IPR023563">
    <property type="entry name" value="Ribosomal_uL13_CS"/>
</dbReference>
<dbReference type="InterPro" id="IPR036899">
    <property type="entry name" value="Ribosomal_uL13_sf"/>
</dbReference>
<dbReference type="NCBIfam" id="TIGR01066">
    <property type="entry name" value="rplM_bact"/>
    <property type="match status" value="1"/>
</dbReference>
<dbReference type="PANTHER" id="PTHR11545:SF2">
    <property type="entry name" value="LARGE RIBOSOMAL SUBUNIT PROTEIN UL13M"/>
    <property type="match status" value="1"/>
</dbReference>
<dbReference type="PANTHER" id="PTHR11545">
    <property type="entry name" value="RIBOSOMAL PROTEIN L13"/>
    <property type="match status" value="1"/>
</dbReference>
<dbReference type="Pfam" id="PF00572">
    <property type="entry name" value="Ribosomal_L13"/>
    <property type="match status" value="1"/>
</dbReference>
<dbReference type="PIRSF" id="PIRSF002181">
    <property type="entry name" value="Ribosomal_L13"/>
    <property type="match status" value="1"/>
</dbReference>
<dbReference type="SUPFAM" id="SSF52161">
    <property type="entry name" value="Ribosomal protein L13"/>
    <property type="match status" value="1"/>
</dbReference>
<dbReference type="PROSITE" id="PS00783">
    <property type="entry name" value="RIBOSOMAL_L13"/>
    <property type="match status" value="1"/>
</dbReference>
<keyword id="KW-0687">Ribonucleoprotein</keyword>
<keyword id="KW-0689">Ribosomal protein</keyword>
<protein>
    <recommendedName>
        <fullName evidence="1">Large ribosomal subunit protein uL13</fullName>
    </recommendedName>
    <alternativeName>
        <fullName evidence="2">50S ribosomal protein L13</fullName>
    </alternativeName>
</protein>
<accession>Q4UKS8</accession>
<name>RL13_RICFE</name>
<sequence length="155" mass="17439">MKTYSAKPSEIEKKWWVIDAKNIVLGRLASRVANMLRGKHKPSFTPHLDCGDNIIIINAEHVKLTGKKANPKDGKIYYRHTGFPGGLKDTTAGKILSSKHPERVIKMAVKRMITRNTLGAKQMSNLYVYANGDHPHMAQQPTVYDFASQNPKNKK</sequence>
<comment type="function">
    <text evidence="1">This protein is one of the early assembly proteins of the 50S ribosomal subunit, although it is not seen to bind rRNA by itself. It is important during the early stages of 50S assembly.</text>
</comment>
<comment type="subunit">
    <text evidence="1">Part of the 50S ribosomal subunit.</text>
</comment>
<comment type="similarity">
    <text evidence="1">Belongs to the universal ribosomal protein uL13 family.</text>
</comment>